<evidence type="ECO:0000250" key="1"/>
<evidence type="ECO:0000255" key="2"/>
<evidence type="ECO:0000255" key="3">
    <source>
        <dbReference type="HAMAP-Rule" id="MF_04032"/>
    </source>
</evidence>
<evidence type="ECO:0000269" key="4">
    <source>
    </source>
</evidence>
<evidence type="ECO:0000269" key="5">
    <source>
    </source>
</evidence>
<evidence type="ECO:0000305" key="6"/>
<evidence type="ECO:0007829" key="7">
    <source>
        <dbReference type="PDB" id="6VLK"/>
    </source>
</evidence>
<protein>
    <recommendedName>
        <fullName evidence="3">Envelope glycoprotein B</fullName>
        <shortName evidence="3">gB</shortName>
    </recommendedName>
</protein>
<organism>
    <name type="scientific">Varicella-zoster virus (strain Oka vaccine)</name>
    <name type="common">HHV-3</name>
    <name type="synonym">Human herpesvirus 3</name>
    <dbReference type="NCBI Taxonomy" id="341980"/>
    <lineage>
        <taxon>Viruses</taxon>
        <taxon>Duplodnaviria</taxon>
        <taxon>Heunggongvirae</taxon>
        <taxon>Peploviricota</taxon>
        <taxon>Herviviricetes</taxon>
        <taxon>Herpesvirales</taxon>
        <taxon>Orthoherpesviridae</taxon>
        <taxon>Alphaherpesvirinae</taxon>
        <taxon>Varicellovirus</taxon>
        <taxon>Varicellovirus humanalpha3</taxon>
        <taxon>Human herpesvirus 3</taxon>
    </lineage>
</organism>
<proteinExistence type="evidence at protein level"/>
<name>GB_VZVO</name>
<reference key="1">
    <citation type="journal article" date="2001" name="Virology">
        <title>Identification and mapping of single nucleotide polymorphisms in the varicella-zoster virus genome.</title>
        <authorList>
            <person name="Faga B."/>
            <person name="Maury W."/>
            <person name="Bruckner D.A."/>
            <person name="Grose C."/>
        </authorList>
    </citation>
    <scope>NUCLEOTIDE SEQUENCE [GENOMIC DNA]</scope>
    <source>
        <strain>Oka varicella vaccine Biken (V-Oka-Biken)</strain>
    </source>
</reference>
<reference key="2">
    <citation type="journal article" date="2002" name="J. Virol.">
        <title>Comparison of the complete DNA sequences of the Oka varicella vaccine and its parental virus.</title>
        <authorList>
            <person name="Gomi Y."/>
            <person name="Sunamachi H."/>
            <person name="Mori Y."/>
            <person name="Nagaike K."/>
            <person name="Takahashi M."/>
            <person name="Yamanishi K."/>
        </authorList>
    </citation>
    <scope>NUCLEOTIDE SEQUENCE [LARGE SCALE GENOMIC DNA]</scope>
    <source>
        <strain>Isolate Human/Japan/P-Oka/1970</strain>
        <strain>Oka varicella vaccine Biken (V-Oka-Biken)</strain>
    </source>
</reference>
<reference key="3">
    <citation type="journal article" date="2008" name="J. Virol.">
        <title>Complete DNA sequences of two oka strain varicella-zoster virus genomes.</title>
        <authorList>
            <person name="Tillieux S.L."/>
            <person name="Halsey W.S."/>
            <person name="Thomas E.S."/>
            <person name="Voycik J.J."/>
            <person name="Sathe G.M."/>
            <person name="Vassilev V."/>
        </authorList>
    </citation>
    <scope>NUCLEOTIDE SEQUENCE [LARGE SCALE GENOMIC DNA]</scope>
    <source>
        <strain>Oka varicella vaccine VarilRix (V-Oka-GSK)</strain>
        <strain>Oka varicella vaccine Varivax (V-Oka-Merck)</strain>
    </source>
</reference>
<reference key="4">
    <citation type="journal article" date="2001" name="Virology">
        <title>VZV gB endocytosis and Golgi localization are mediated by YXXphi motifs in its cytoplasmic domain.</title>
        <authorList>
            <person name="Heineman T.C."/>
            <person name="Hall S.L."/>
        </authorList>
    </citation>
    <scope>SUBCELLULAR LOCATION</scope>
    <scope>INTERNALIZATION MOTIFS</scope>
    <scope>MUTAGENESIS OF TYR-881; 904-LEU-LEU-905 AND TYR-920</scope>
</reference>
<reference key="5">
    <citation type="journal article" date="2009" name="J. Virol.">
        <title>Mutagenesis of varicella-zoster virus glycoprotein B: putative fusion loop residues are essential for viral replication and the furin cleavage motif contributes to pathogenesis in skin in vivo.</title>
        <authorList>
            <person name="Oliver S.L."/>
            <person name="Sommer M.H."/>
            <person name="Zerboni L."/>
            <person name="Rajamani J."/>
            <person name="Grose C."/>
            <person name="Arvin A.M."/>
        </authorList>
    </citation>
    <scope>MUTAGENESIS OF 491-ARG--ARG-494</scope>
</reference>
<gene>
    <name evidence="3" type="primary">gB</name>
    <name type="ORF">ORF31</name>
</gene>
<accession>Q4JR05</accession>
<accession>Q4JQU4</accession>
<accession>Q775J4</accession>
<dbReference type="EMBL" id="AH010548">
    <property type="protein sequence ID" value="AAK19938.1"/>
    <property type="status" value="ALT_INIT"/>
    <property type="molecule type" value="Genomic_DNA"/>
</dbReference>
<dbReference type="EMBL" id="AB097932">
    <property type="status" value="NOT_ANNOTATED_CDS"/>
    <property type="molecule type" value="Genomic_DNA"/>
</dbReference>
<dbReference type="EMBL" id="AB097933">
    <property type="status" value="NOT_ANNOTATED_CDS"/>
    <property type="molecule type" value="Genomic_DNA"/>
</dbReference>
<dbReference type="EMBL" id="DQ008354">
    <property type="protein sequence ID" value="AAY57644.1"/>
    <property type="status" value="ALT_INIT"/>
    <property type="molecule type" value="Genomic_DNA"/>
</dbReference>
<dbReference type="EMBL" id="DQ008355">
    <property type="protein sequence ID" value="AAY57715.1"/>
    <property type="status" value="ALT_INIT"/>
    <property type="molecule type" value="Genomic_DNA"/>
</dbReference>
<dbReference type="PDB" id="6VLK">
    <property type="method" value="X-ray"/>
    <property type="resolution" value="2.45 A"/>
    <property type="chains" value="A/B=1-736"/>
</dbReference>
<dbReference type="PDBsum" id="6VLK"/>
<dbReference type="SMR" id="Q4JR05"/>
<dbReference type="DIP" id="DIP-56356N"/>
<dbReference type="IntAct" id="Q4JR05">
    <property type="interactions" value="5"/>
</dbReference>
<dbReference type="GlyCosmos" id="Q4JR05">
    <property type="glycosylation" value="6 sites, No reported glycans"/>
</dbReference>
<dbReference type="Proteomes" id="UP000002603">
    <property type="component" value="Genome"/>
</dbReference>
<dbReference type="Proteomes" id="UP000008504">
    <property type="component" value="Genome"/>
</dbReference>
<dbReference type="Proteomes" id="UP000008505">
    <property type="component" value="Genome"/>
</dbReference>
<dbReference type="Proteomes" id="UP000008506">
    <property type="component" value="Genome"/>
</dbReference>
<dbReference type="GO" id="GO:0044175">
    <property type="term" value="C:host cell endosome membrane"/>
    <property type="evidence" value="ECO:0007669"/>
    <property type="project" value="UniProtKB-SubCell"/>
</dbReference>
<dbReference type="GO" id="GO:0044178">
    <property type="term" value="C:host cell Golgi membrane"/>
    <property type="evidence" value="ECO:0007669"/>
    <property type="project" value="UniProtKB-SubCell"/>
</dbReference>
<dbReference type="GO" id="GO:0020002">
    <property type="term" value="C:host cell plasma membrane"/>
    <property type="evidence" value="ECO:0007669"/>
    <property type="project" value="UniProtKB-SubCell"/>
</dbReference>
<dbReference type="GO" id="GO:0016020">
    <property type="term" value="C:membrane"/>
    <property type="evidence" value="ECO:0007669"/>
    <property type="project" value="UniProtKB-KW"/>
</dbReference>
<dbReference type="GO" id="GO:0019031">
    <property type="term" value="C:viral envelope"/>
    <property type="evidence" value="ECO:0007669"/>
    <property type="project" value="UniProtKB-KW"/>
</dbReference>
<dbReference type="GO" id="GO:0055036">
    <property type="term" value="C:virion membrane"/>
    <property type="evidence" value="ECO:0007669"/>
    <property type="project" value="UniProtKB-SubCell"/>
</dbReference>
<dbReference type="GO" id="GO:0046718">
    <property type="term" value="P:symbiont entry into host cell"/>
    <property type="evidence" value="ECO:0007669"/>
    <property type="project" value="UniProtKB-KW"/>
</dbReference>
<dbReference type="GO" id="GO:0019062">
    <property type="term" value="P:virion attachment to host cell"/>
    <property type="evidence" value="ECO:0007669"/>
    <property type="project" value="UniProtKB-KW"/>
</dbReference>
<dbReference type="Gene3D" id="1.20.5.1890">
    <property type="match status" value="1"/>
</dbReference>
<dbReference type="Gene3D" id="2.30.29.100">
    <property type="match status" value="1"/>
</dbReference>
<dbReference type="Gene3D" id="2.30.30.1230">
    <property type="match status" value="1"/>
</dbReference>
<dbReference type="Gene3D" id="6.10.250.3280">
    <property type="match status" value="1"/>
</dbReference>
<dbReference type="HAMAP" id="MF_04032">
    <property type="entry name" value="HSV_GB"/>
    <property type="match status" value="1"/>
</dbReference>
<dbReference type="InterPro" id="IPR035377">
    <property type="entry name" value="Glycoprot_B_PH1"/>
</dbReference>
<dbReference type="InterPro" id="IPR035381">
    <property type="entry name" value="Glycoprot_B_PH2"/>
</dbReference>
<dbReference type="InterPro" id="IPR038631">
    <property type="entry name" value="Glycoprot_B_PH2_sf"/>
</dbReference>
<dbReference type="InterPro" id="IPR055341">
    <property type="entry name" value="Glycoprotein_B_ecto_C"/>
</dbReference>
<dbReference type="InterPro" id="IPR000234">
    <property type="entry name" value="Herpes_Glycoprot_B"/>
</dbReference>
<dbReference type="Pfam" id="PF17416">
    <property type="entry name" value="Glycoprot_B_PH1"/>
    <property type="match status" value="1"/>
</dbReference>
<dbReference type="Pfam" id="PF17417">
    <property type="entry name" value="Glycoprot_B_PH2"/>
    <property type="match status" value="1"/>
</dbReference>
<dbReference type="Pfam" id="PF00606">
    <property type="entry name" value="Glycoprotein_B"/>
    <property type="match status" value="1"/>
</dbReference>
<dbReference type="SUPFAM" id="SSF161008">
    <property type="entry name" value="Viral glycoprotein ectodomain-like"/>
    <property type="match status" value="1"/>
</dbReference>
<dbReference type="PROSITE" id="PS00430">
    <property type="entry name" value="TONB_DEPENDENT_REC_1"/>
    <property type="match status" value="1"/>
</dbReference>
<comment type="function">
    <text evidence="3">Envelope glycoprotein that forms spikes at the surface of virion envelope. Essential for the initial attachment to heparan sulfate moieties of the host cell surface proteoglycans. Involved in fusion of viral and cellular membranes leading to virus entry into the host cell. Following initial binding to its host receptors, membrane fusion is mediated by the fusion machinery composed at least of gB and the heterodimer gH/gL. May be involved in the fusion between the virion envelope and the outer nuclear membrane during virion egress.</text>
</comment>
<comment type="subunit">
    <text evidence="3">Homotrimer; disulfide-linked. Binds to heparan sulfate proteoglycans. Interacts with gH/gL heterodimer.</text>
</comment>
<comment type="subcellular location">
    <subcellularLocation>
        <location evidence="3">Virion membrane</location>
        <topology evidence="3">Single-pass type I membrane protein</topology>
    </subcellularLocation>
    <subcellularLocation>
        <location evidence="3">Host cell membrane</location>
        <topology evidence="3">Single-pass type I membrane protein</topology>
    </subcellularLocation>
    <subcellularLocation>
        <location evidence="3">Host endosome membrane</location>
        <topology evidence="3">Single-pass type I membrane protein</topology>
    </subcellularLocation>
    <subcellularLocation>
        <location evidence="3 4">Host Golgi apparatus membrane</location>
        <topology evidence="3">Single-pass type I membrane protein</topology>
    </subcellularLocation>
    <text evidence="3">During virion morphogenesis, this protein probably accumulates in the endosomes and trans-Golgi where secondary envelopment occurs. It is probably transported to the cell surface from where it is endocytosed and directed to the trans-Golgi network (TGN).</text>
</comment>
<comment type="PTM">
    <text evidence="1">A proteolytic cleavage by host furin generates two subunits that remain linked by disulfide bonds.</text>
</comment>
<comment type="similarity">
    <text evidence="3">Belongs to the herpesviridae glycoprotein B family.</text>
</comment>
<comment type="sequence caution" evidence="6">
    <conflict type="erroneous initiation">
        <sequence resource="EMBL-CDS" id="AAK19938"/>
    </conflict>
</comment>
<comment type="sequence caution" evidence="6">
    <conflict type="erroneous initiation">
        <sequence resource="EMBL-CDS" id="AAY57644"/>
    </conflict>
</comment>
<comment type="sequence caution" evidence="6">
    <conflict type="erroneous initiation">
        <sequence resource="EMBL-CDS" id="AAY57715"/>
    </conflict>
</comment>
<feature type="signal peptide" evidence="2">
    <location>
        <begin position="1"/>
        <end position="71"/>
    </location>
</feature>
<feature type="chain" id="PRO_0000385466" description="Envelope glycoprotein B">
    <location>
        <begin position="72"/>
        <end position="931"/>
    </location>
</feature>
<feature type="topological domain" description="Virion surface" evidence="3">
    <location>
        <begin position="72"/>
        <end position="786"/>
    </location>
</feature>
<feature type="transmembrane region" description="Helical" evidence="3">
    <location>
        <begin position="787"/>
        <end position="807"/>
    </location>
</feature>
<feature type="topological domain" description="Intravirion" evidence="3">
    <location>
        <begin position="808"/>
        <end position="931"/>
    </location>
</feature>
<feature type="region of interest" description="Involved in fusion and/or binding to host membrane" evidence="3">
    <location>
        <begin position="179"/>
        <end position="185"/>
    </location>
</feature>
<feature type="region of interest" description="Involved in fusion and/or binding to host membrane" evidence="3">
    <location>
        <begin position="264"/>
        <end position="271"/>
    </location>
</feature>
<feature type="region of interest" description="Hydrophobic membrane proximal region" evidence="3">
    <location>
        <begin position="731"/>
        <end position="784"/>
    </location>
</feature>
<feature type="region of interest" description="Hydrophobic membrane proximal region">
    <location>
        <begin position="764"/>
        <end position="784"/>
    </location>
</feature>
<feature type="short sequence motif" description="Golgi targeting" evidence="3">
    <location>
        <begin position="881"/>
        <end position="884"/>
    </location>
</feature>
<feature type="short sequence motif" description="Internalization motif" evidence="3">
    <location>
        <begin position="920"/>
        <end position="923"/>
    </location>
</feature>
<feature type="site" description="Cleavage; by host furin" evidence="2">
    <location>
        <begin position="494"/>
        <end position="495"/>
    </location>
</feature>
<feature type="glycosylation site" description="N-linked (GlcNAc...) asparagine; by host" evidence="3">
    <location>
        <position position="147"/>
    </location>
</feature>
<feature type="glycosylation site" description="N-linked (GlcNAc...) asparagine; by host" evidence="3">
    <location>
        <position position="257"/>
    </location>
</feature>
<feature type="glycosylation site" description="N-linked (GlcNAc...) asparagine; by host" evidence="3">
    <location>
        <position position="435"/>
    </location>
</feature>
<feature type="glycosylation site" description="N-linked (GlcNAc...) asparagine; by host" evidence="3">
    <location>
        <position position="503"/>
    </location>
</feature>
<feature type="glycosylation site" description="N-linked (GlcNAc...) asparagine; by host" evidence="3">
    <location>
        <position position="620"/>
    </location>
</feature>
<feature type="glycosylation site" description="N-linked (GlcNAc...) asparagine; by host" evidence="3">
    <location>
        <position position="686"/>
    </location>
</feature>
<feature type="disulfide bond" evidence="3">
    <location>
        <begin position="122"/>
        <end position="584"/>
    </location>
</feature>
<feature type="disulfide bond" evidence="3">
    <location>
        <begin position="139"/>
        <end position="540"/>
    </location>
</feature>
<feature type="disulfide bond" evidence="3">
    <location>
        <begin position="213"/>
        <end position="277"/>
    </location>
</feature>
<feature type="disulfide bond" evidence="3">
    <location>
        <begin position="369"/>
        <end position="417"/>
    </location>
</feature>
<feature type="disulfide bond" evidence="3">
    <location>
        <begin position="608"/>
        <end position="645"/>
    </location>
</feature>
<feature type="mutagenesis site" description="Attenuation of viral replication in human skin xenografts in vivo." evidence="5">
    <original>RSRR</original>
    <variation>GSGG</variation>
    <location>
        <begin position="491"/>
        <end position="494"/>
    </location>
</feature>
<feature type="mutagenesis site" description="No effect on internalization. Complete loss of Golgi targeting leads to mislocalization to the cytoplasm." evidence="4">
    <original>Y</original>
    <variation>A</variation>
    <location>
        <position position="881"/>
    </location>
</feature>
<feature type="mutagenesis site" description="Complete loss of internalization leads to mislocalization to the plasma membrane." evidence="4">
    <original>LL</original>
    <variation>HA</variation>
    <location>
        <begin position="904"/>
        <end position="905"/>
    </location>
</feature>
<feature type="mutagenesis site" description="No effect on internalization and Golgi targeting." evidence="4">
    <original>Y</original>
    <variation>A</variation>
    <location>
        <position position="920"/>
    </location>
</feature>
<feature type="strand" evidence="7">
    <location>
        <begin position="129"/>
        <end position="131"/>
    </location>
</feature>
<feature type="strand" evidence="7">
    <location>
        <begin position="148"/>
        <end position="158"/>
    </location>
</feature>
<feature type="strand" evidence="7">
    <location>
        <begin position="163"/>
        <end position="181"/>
    </location>
</feature>
<feature type="strand" evidence="7">
    <location>
        <begin position="186"/>
        <end position="197"/>
    </location>
</feature>
<feature type="helix" evidence="7">
    <location>
        <begin position="200"/>
        <end position="205"/>
    </location>
</feature>
<feature type="helix" evidence="7">
    <location>
        <begin position="207"/>
        <end position="210"/>
    </location>
</feature>
<feature type="strand" evidence="7">
    <location>
        <begin position="211"/>
        <end position="221"/>
    </location>
</feature>
<feature type="strand" evidence="7">
    <location>
        <begin position="224"/>
        <end position="229"/>
    </location>
</feature>
<feature type="helix" evidence="7">
    <location>
        <begin position="230"/>
        <end position="232"/>
    </location>
</feature>
<feature type="strand" evidence="7">
    <location>
        <begin position="237"/>
        <end position="239"/>
    </location>
</feature>
<feature type="strand" evidence="7">
    <location>
        <begin position="252"/>
        <end position="255"/>
    </location>
</feature>
<feature type="strand" evidence="7">
    <location>
        <begin position="269"/>
        <end position="286"/>
    </location>
</feature>
<feature type="strand" evidence="7">
    <location>
        <begin position="293"/>
        <end position="295"/>
    </location>
</feature>
<feature type="helix" evidence="7">
    <location>
        <begin position="313"/>
        <end position="315"/>
    </location>
</feature>
<feature type="helix" evidence="7">
    <location>
        <begin position="322"/>
        <end position="324"/>
    </location>
</feature>
<feature type="strand" evidence="7">
    <location>
        <begin position="325"/>
        <end position="331"/>
    </location>
</feature>
<feature type="turn" evidence="7">
    <location>
        <begin position="336"/>
        <end position="338"/>
    </location>
</feature>
<feature type="strand" evidence="7">
    <location>
        <begin position="345"/>
        <end position="351"/>
    </location>
</feature>
<feature type="strand" evidence="7">
    <location>
        <begin position="356"/>
        <end position="360"/>
    </location>
</feature>
<feature type="helix" evidence="7">
    <location>
        <begin position="364"/>
        <end position="366"/>
    </location>
</feature>
<feature type="strand" evidence="7">
    <location>
        <begin position="370"/>
        <end position="385"/>
    </location>
</feature>
<feature type="strand" evidence="7">
    <location>
        <begin position="388"/>
        <end position="393"/>
    </location>
</feature>
<feature type="turn" evidence="7">
    <location>
        <begin position="394"/>
        <end position="397"/>
    </location>
</feature>
<feature type="strand" evidence="7">
    <location>
        <begin position="398"/>
        <end position="402"/>
    </location>
</feature>
<feature type="helix" evidence="7">
    <location>
        <begin position="409"/>
        <end position="411"/>
    </location>
</feature>
<feature type="helix" evidence="7">
    <location>
        <begin position="417"/>
        <end position="433"/>
    </location>
</feature>
<feature type="turn" evidence="7">
    <location>
        <begin position="434"/>
        <end position="437"/>
    </location>
</feature>
<feature type="strand" evidence="7">
    <location>
        <begin position="438"/>
        <end position="440"/>
    </location>
</feature>
<feature type="strand" evidence="7">
    <location>
        <begin position="445"/>
        <end position="449"/>
    </location>
</feature>
<feature type="turn" evidence="7">
    <location>
        <begin position="450"/>
        <end position="452"/>
    </location>
</feature>
<feature type="strand" evidence="7">
    <location>
        <begin position="453"/>
        <end position="462"/>
    </location>
</feature>
<feature type="helix" evidence="7">
    <location>
        <begin position="513"/>
        <end position="553"/>
    </location>
</feature>
<feature type="turn" evidence="7">
    <location>
        <begin position="554"/>
        <end position="556"/>
    </location>
</feature>
<feature type="helix" evidence="7">
    <location>
        <begin position="558"/>
        <end position="565"/>
    </location>
</feature>
<feature type="strand" evidence="7">
    <location>
        <begin position="570"/>
        <end position="574"/>
    </location>
</feature>
<feature type="strand" evidence="7">
    <location>
        <begin position="576"/>
        <end position="583"/>
    </location>
</feature>
<feature type="strand" evidence="7">
    <location>
        <begin position="589"/>
        <end position="595"/>
    </location>
</feature>
<feature type="strand" evidence="7">
    <location>
        <begin position="605"/>
        <end position="611"/>
    </location>
</feature>
<feature type="strand" evidence="7">
    <location>
        <begin position="613"/>
        <end position="618"/>
    </location>
</feature>
<feature type="strand" evidence="7">
    <location>
        <begin position="624"/>
        <end position="629"/>
    </location>
</feature>
<feature type="strand" evidence="7">
    <location>
        <begin position="634"/>
        <end position="638"/>
    </location>
</feature>
<feature type="strand" evidence="7">
    <location>
        <begin position="642"/>
        <end position="644"/>
    </location>
</feature>
<feature type="strand" evidence="7">
    <location>
        <begin position="650"/>
        <end position="655"/>
    </location>
</feature>
<feature type="strand" evidence="7">
    <location>
        <begin position="658"/>
        <end position="663"/>
    </location>
</feature>
<feature type="strand" evidence="7">
    <location>
        <begin position="666"/>
        <end position="672"/>
    </location>
</feature>
<feature type="helix" evidence="7">
    <location>
        <begin position="673"/>
        <end position="675"/>
    </location>
</feature>
<feature type="helix" evidence="7">
    <location>
        <begin position="703"/>
        <end position="706"/>
    </location>
</feature>
<feature type="helix" evidence="7">
    <location>
        <begin position="714"/>
        <end position="721"/>
    </location>
</feature>
<feature type="helix" evidence="7">
    <location>
        <begin position="724"/>
        <end position="728"/>
    </location>
</feature>
<organismHost>
    <name type="scientific">Homo sapiens</name>
    <name type="common">Human</name>
    <dbReference type="NCBI Taxonomy" id="9606"/>
</organismHost>
<sequence length="931" mass="105343">MSPCGYYSKWRNRDRPEYRRNLRFRRFFSSIHPNAAAGSGFNGPGVFITSVTGVWLCFLCIFSMFVTAVVSVSPSSFYESLQVEPTQSEDITRSAHLGDGDEIREAIHKSQDAETKPTFYVCPPPTGSTIVRLEPPRTCPDYHLGKNFTEGIAVVYKENIAAYKFKATVYYKDVIVSTAWAGSSYTQITNRYADRVPIPVSEITDTIDKFGKCSSKATYVRNNHKVEAFNEDKNPQDMPLIASKYNSVGSKAWHTTNDTYMVAGTPGTYRTGTSVNCIIEEVEARSIFPYDSFGLSTGDIIYMSPFFGLRDGAYREHSNYAMDRFHQFEGYRQRDLDTRALLEPAARNFLVTPHLTVGWNWKPKRTEVCSLVKWREVEDVVRDEYAHNFRFTMKTLSTTFISETNEFNLNQIHLSQCVKEEARAIINRIYTTRYNSSHVRTGDIQTYLARGGFVVVFQPLLSNSLARLYLQELVRENTNHSPQKHPTRNTRSRRSVPVELRANRTITTTSSVEFAMLQFTYDHIQEHVNEMLARISSSWCQLQNRERALWSGLFPINPSALASTILDQRVKARILGDVISVSNCPELGSDTRIILQNSMRVSGSTTRCYSRPLISIVSLNGSGTVEGQLGTDNELIMSRDLLEPCVANHKRYFLFGHHYVYYEDYRYVREIAVHDVGMISTYVDLNLTLLKDREFMPLQVYTRDELRDTGLLDYSEIQRRNQMHSLRFYDIDKVVQYDSGTAIMQGMAQFFQGLGTAGQAVGHVVLGATGALLSTVHGFTTFLSNPFGALAVGLLVLAGLVAAFFAYRYVLKLKTSPMKALYPLTTKGLKQLPEGMDPFAEKPNATDTPIEEIGDSQNTEPSVNSGFDPDKFREAQEMIKYMTLVSAAERQESKARKKNKTSALLTSRLTGLALRNRRGYSRVRTENVTGV</sequence>
<keyword id="KW-0002">3D-structure</keyword>
<keyword id="KW-1015">Disulfide bond</keyword>
<keyword id="KW-0325">Glycoprotein</keyword>
<keyword id="KW-1032">Host cell membrane</keyword>
<keyword id="KW-1039">Host endosome</keyword>
<keyword id="KW-1040">Host Golgi apparatus</keyword>
<keyword id="KW-1043">Host membrane</keyword>
<keyword id="KW-0945">Host-virus interaction</keyword>
<keyword id="KW-0472">Membrane</keyword>
<keyword id="KW-0732">Signal</keyword>
<keyword id="KW-0812">Transmembrane</keyword>
<keyword id="KW-1133">Transmembrane helix</keyword>
<keyword id="KW-1161">Viral attachment to host cell</keyword>
<keyword id="KW-0261">Viral envelope protein</keyword>
<keyword id="KW-0946">Virion</keyword>
<keyword id="KW-1160">Virus entry into host cell</keyword>